<gene>
    <name evidence="1" type="primary">fluC</name>
    <name evidence="1" type="synonym">crcB</name>
    <name type="ordered locus">Sala_2101</name>
</gene>
<name>FLUC_SPHAL</name>
<comment type="function">
    <text evidence="1">Fluoride-specific ion channel. Important for reducing fluoride concentration in the cell, thus reducing its toxicity.</text>
</comment>
<comment type="catalytic activity">
    <reaction evidence="1">
        <text>fluoride(in) = fluoride(out)</text>
        <dbReference type="Rhea" id="RHEA:76159"/>
        <dbReference type="ChEBI" id="CHEBI:17051"/>
    </reaction>
    <physiologicalReaction direction="left-to-right" evidence="1">
        <dbReference type="Rhea" id="RHEA:76160"/>
    </physiologicalReaction>
</comment>
<comment type="activity regulation">
    <text evidence="1">Na(+) is not transported, but it plays an essential structural role and its presence is essential for fluoride channel function.</text>
</comment>
<comment type="subcellular location">
    <subcellularLocation>
        <location evidence="1">Cell inner membrane</location>
        <topology evidence="1">Multi-pass membrane protein</topology>
    </subcellularLocation>
</comment>
<comment type="similarity">
    <text evidence="1">Belongs to the fluoride channel Fluc/FEX (TC 1.A.43) family.</text>
</comment>
<protein>
    <recommendedName>
        <fullName evidence="1">Fluoride-specific ion channel FluC</fullName>
    </recommendedName>
</protein>
<dbReference type="EMBL" id="CP000356">
    <property type="protein sequence ID" value="ABF53810.1"/>
    <property type="molecule type" value="Genomic_DNA"/>
</dbReference>
<dbReference type="RefSeq" id="WP_011542386.1">
    <property type="nucleotide sequence ID" value="NC_008048.1"/>
</dbReference>
<dbReference type="SMR" id="Q1GRB2"/>
<dbReference type="STRING" id="317655.Sala_2101"/>
<dbReference type="KEGG" id="sal:Sala_2101"/>
<dbReference type="eggNOG" id="COG0239">
    <property type="taxonomic scope" value="Bacteria"/>
</dbReference>
<dbReference type="HOGENOM" id="CLU_114342_2_3_5"/>
<dbReference type="OrthoDB" id="9806299at2"/>
<dbReference type="Proteomes" id="UP000006578">
    <property type="component" value="Chromosome"/>
</dbReference>
<dbReference type="GO" id="GO:0005886">
    <property type="term" value="C:plasma membrane"/>
    <property type="evidence" value="ECO:0007669"/>
    <property type="project" value="UniProtKB-SubCell"/>
</dbReference>
<dbReference type="GO" id="GO:0062054">
    <property type="term" value="F:fluoride channel activity"/>
    <property type="evidence" value="ECO:0007669"/>
    <property type="project" value="UniProtKB-UniRule"/>
</dbReference>
<dbReference type="GO" id="GO:0046872">
    <property type="term" value="F:metal ion binding"/>
    <property type="evidence" value="ECO:0007669"/>
    <property type="project" value="UniProtKB-KW"/>
</dbReference>
<dbReference type="GO" id="GO:0140114">
    <property type="term" value="P:cellular detoxification of fluoride"/>
    <property type="evidence" value="ECO:0007669"/>
    <property type="project" value="UniProtKB-UniRule"/>
</dbReference>
<dbReference type="HAMAP" id="MF_00454">
    <property type="entry name" value="FluC"/>
    <property type="match status" value="1"/>
</dbReference>
<dbReference type="InterPro" id="IPR003691">
    <property type="entry name" value="FluC"/>
</dbReference>
<dbReference type="NCBIfam" id="TIGR00494">
    <property type="entry name" value="crcB"/>
    <property type="match status" value="1"/>
</dbReference>
<dbReference type="PANTHER" id="PTHR28259">
    <property type="entry name" value="FLUORIDE EXPORT PROTEIN 1-RELATED"/>
    <property type="match status" value="1"/>
</dbReference>
<dbReference type="PANTHER" id="PTHR28259:SF1">
    <property type="entry name" value="FLUORIDE EXPORT PROTEIN 1-RELATED"/>
    <property type="match status" value="1"/>
</dbReference>
<dbReference type="Pfam" id="PF02537">
    <property type="entry name" value="CRCB"/>
    <property type="match status" value="1"/>
</dbReference>
<feature type="chain" id="PRO_0000252940" description="Fluoride-specific ion channel FluC">
    <location>
        <begin position="1"/>
        <end position="126"/>
    </location>
</feature>
<feature type="transmembrane region" description="Helical" evidence="1">
    <location>
        <begin position="35"/>
        <end position="55"/>
    </location>
</feature>
<feature type="transmembrane region" description="Helical" evidence="1">
    <location>
        <begin position="71"/>
        <end position="91"/>
    </location>
</feature>
<feature type="transmembrane region" description="Helical" evidence="1">
    <location>
        <begin position="101"/>
        <end position="121"/>
    </location>
</feature>
<feature type="binding site" evidence="1">
    <location>
        <position position="75"/>
    </location>
    <ligand>
        <name>Na(+)</name>
        <dbReference type="ChEBI" id="CHEBI:29101"/>
        <note>structural</note>
    </ligand>
</feature>
<feature type="binding site" evidence="1">
    <location>
        <position position="78"/>
    </location>
    <ligand>
        <name>Na(+)</name>
        <dbReference type="ChEBI" id="CHEBI:29101"/>
        <note>structural</note>
    </ligand>
</feature>
<reference key="1">
    <citation type="journal article" date="2009" name="Proc. Natl. Acad. Sci. U.S.A.">
        <title>The genomic basis of trophic strategy in marine bacteria.</title>
        <authorList>
            <person name="Lauro F.M."/>
            <person name="McDougald D."/>
            <person name="Thomas T."/>
            <person name="Williams T.J."/>
            <person name="Egan S."/>
            <person name="Rice S."/>
            <person name="DeMaere M.Z."/>
            <person name="Ting L."/>
            <person name="Ertan H."/>
            <person name="Johnson J."/>
            <person name="Ferriera S."/>
            <person name="Lapidus A."/>
            <person name="Anderson I."/>
            <person name="Kyrpides N."/>
            <person name="Munk A.C."/>
            <person name="Detter C."/>
            <person name="Han C.S."/>
            <person name="Brown M.V."/>
            <person name="Robb F.T."/>
            <person name="Kjelleberg S."/>
            <person name="Cavicchioli R."/>
        </authorList>
    </citation>
    <scope>NUCLEOTIDE SEQUENCE [LARGE SCALE GENOMIC DNA]</scope>
    <source>
        <strain>DSM 13593 / LMG 18877 / RB2256</strain>
    </source>
</reference>
<sequence>MNSLFPVMVGGAVGAGARHLVGQAMLARFGPGFPWWTLSVNIVGSLAMGLLIGLLARSGTGGETTRLFVGVGMLGGFTTFSSFSMEFWLLFERGQSVQAGLYVVASVVGALLACGAGMILIRQLPA</sequence>
<accession>Q1GRB2</accession>
<proteinExistence type="inferred from homology"/>
<keyword id="KW-0997">Cell inner membrane</keyword>
<keyword id="KW-1003">Cell membrane</keyword>
<keyword id="KW-0407">Ion channel</keyword>
<keyword id="KW-0406">Ion transport</keyword>
<keyword id="KW-0472">Membrane</keyword>
<keyword id="KW-0479">Metal-binding</keyword>
<keyword id="KW-1185">Reference proteome</keyword>
<keyword id="KW-0915">Sodium</keyword>
<keyword id="KW-0812">Transmembrane</keyword>
<keyword id="KW-1133">Transmembrane helix</keyword>
<keyword id="KW-0813">Transport</keyword>
<organism>
    <name type="scientific">Sphingopyxis alaskensis (strain DSM 13593 / LMG 18877 / RB2256)</name>
    <name type="common">Sphingomonas alaskensis</name>
    <dbReference type="NCBI Taxonomy" id="317655"/>
    <lineage>
        <taxon>Bacteria</taxon>
        <taxon>Pseudomonadati</taxon>
        <taxon>Pseudomonadota</taxon>
        <taxon>Alphaproteobacteria</taxon>
        <taxon>Sphingomonadales</taxon>
        <taxon>Sphingomonadaceae</taxon>
        <taxon>Sphingopyxis</taxon>
    </lineage>
</organism>
<evidence type="ECO:0000255" key="1">
    <source>
        <dbReference type="HAMAP-Rule" id="MF_00454"/>
    </source>
</evidence>